<protein>
    <recommendedName>
        <fullName evidence="1">Fe(3+) ions import ATP-binding protein FbpC</fullName>
        <ecNumber evidence="1">7.2.2.7</ecNumber>
    </recommendedName>
</protein>
<keyword id="KW-0067">ATP-binding</keyword>
<keyword id="KW-0997">Cell inner membrane</keyword>
<keyword id="KW-1003">Cell membrane</keyword>
<keyword id="KW-0406">Ion transport</keyword>
<keyword id="KW-0408">Iron</keyword>
<keyword id="KW-0410">Iron transport</keyword>
<keyword id="KW-0472">Membrane</keyword>
<keyword id="KW-0547">Nucleotide-binding</keyword>
<keyword id="KW-1185">Reference proteome</keyword>
<keyword id="KW-1278">Translocase</keyword>
<keyword id="KW-0813">Transport</keyword>
<comment type="function">
    <text evidence="1">Part of the ABC transporter complex FbpABC involved in Fe(3+) ions import. Responsible for energy coupling to the transport system.</text>
</comment>
<comment type="catalytic activity">
    <reaction evidence="1">
        <text>Fe(3+)(out) + ATP + H2O = Fe(3+)(in) + ADP + phosphate + H(+)</text>
        <dbReference type="Rhea" id="RHEA:12332"/>
        <dbReference type="ChEBI" id="CHEBI:15377"/>
        <dbReference type="ChEBI" id="CHEBI:15378"/>
        <dbReference type="ChEBI" id="CHEBI:29034"/>
        <dbReference type="ChEBI" id="CHEBI:30616"/>
        <dbReference type="ChEBI" id="CHEBI:43474"/>
        <dbReference type="ChEBI" id="CHEBI:456216"/>
        <dbReference type="EC" id="7.2.2.7"/>
    </reaction>
</comment>
<comment type="subunit">
    <text evidence="1">The complex is composed of two ATP-binding proteins (FbpC), two transmembrane proteins (FbpB) and a solute-binding protein (FbpA).</text>
</comment>
<comment type="subcellular location">
    <subcellularLocation>
        <location evidence="1">Cell inner membrane</location>
        <topology evidence="1">Peripheral membrane protein</topology>
    </subcellularLocation>
</comment>
<comment type="similarity">
    <text evidence="1">Belongs to the ABC transporter superfamily. Fe(3+) ion importer (TC 3.A.1.10) family.</text>
</comment>
<accession>Q4W575</accession>
<name>FBPC_NEIMB</name>
<gene>
    <name evidence="1" type="primary">fbpC</name>
    <name type="ordered locus">NMB0632</name>
</gene>
<organism>
    <name type="scientific">Neisseria meningitidis serogroup B (strain ATCC BAA-335 / MC58)</name>
    <dbReference type="NCBI Taxonomy" id="122586"/>
    <lineage>
        <taxon>Bacteria</taxon>
        <taxon>Pseudomonadati</taxon>
        <taxon>Pseudomonadota</taxon>
        <taxon>Betaproteobacteria</taxon>
        <taxon>Neisseriales</taxon>
        <taxon>Neisseriaceae</taxon>
        <taxon>Neisseria</taxon>
    </lineage>
</organism>
<feature type="chain" id="PRO_0000272041" description="Fe(3+) ions import ATP-binding protein FbpC">
    <location>
        <begin position="1"/>
        <end position="352"/>
    </location>
</feature>
<feature type="domain" description="ABC transporter" evidence="1">
    <location>
        <begin position="5"/>
        <end position="239"/>
    </location>
</feature>
<feature type="binding site" evidence="1">
    <location>
        <begin position="37"/>
        <end position="44"/>
    </location>
    <ligand>
        <name>ATP</name>
        <dbReference type="ChEBI" id="CHEBI:30616"/>
    </ligand>
</feature>
<dbReference type="EC" id="7.2.2.7" evidence="1"/>
<dbReference type="EMBL" id="AE002098">
    <property type="protein sequence ID" value="AAY52135.1"/>
    <property type="molecule type" value="Genomic_DNA"/>
</dbReference>
<dbReference type="RefSeq" id="NP_273675.1">
    <property type="nucleotide sequence ID" value="NC_003112.2"/>
</dbReference>
<dbReference type="RefSeq" id="WP_002219640.1">
    <property type="nucleotide sequence ID" value="NC_003112.2"/>
</dbReference>
<dbReference type="SMR" id="Q4W575"/>
<dbReference type="STRING" id="122586.NMB0632"/>
<dbReference type="PaxDb" id="122586-NMB0632"/>
<dbReference type="GeneID" id="93386534"/>
<dbReference type="KEGG" id="nme:NMB0632"/>
<dbReference type="PATRIC" id="fig|122586.8.peg.800"/>
<dbReference type="HOGENOM" id="CLU_000604_1_1_4"/>
<dbReference type="InParanoid" id="Q4W575"/>
<dbReference type="OrthoDB" id="5298774at2"/>
<dbReference type="Proteomes" id="UP000000425">
    <property type="component" value="Chromosome"/>
</dbReference>
<dbReference type="GO" id="GO:0005886">
    <property type="term" value="C:plasma membrane"/>
    <property type="evidence" value="ECO:0007669"/>
    <property type="project" value="UniProtKB-SubCell"/>
</dbReference>
<dbReference type="GO" id="GO:0015408">
    <property type="term" value="F:ABC-type ferric iron transporter activity"/>
    <property type="evidence" value="ECO:0007669"/>
    <property type="project" value="UniProtKB-EC"/>
</dbReference>
<dbReference type="GO" id="GO:0005524">
    <property type="term" value="F:ATP binding"/>
    <property type="evidence" value="ECO:0007669"/>
    <property type="project" value="UniProtKB-KW"/>
</dbReference>
<dbReference type="GO" id="GO:0016887">
    <property type="term" value="F:ATP hydrolysis activity"/>
    <property type="evidence" value="ECO:0007669"/>
    <property type="project" value="InterPro"/>
</dbReference>
<dbReference type="CDD" id="cd03259">
    <property type="entry name" value="ABC_Carb_Solutes_like"/>
    <property type="match status" value="1"/>
</dbReference>
<dbReference type="FunFam" id="3.40.50.300:FF:000425">
    <property type="entry name" value="Probable ABC transporter, ATP-binding subunit"/>
    <property type="match status" value="1"/>
</dbReference>
<dbReference type="Gene3D" id="2.40.50.450">
    <property type="match status" value="1"/>
</dbReference>
<dbReference type="Gene3D" id="2.40.50.470">
    <property type="match status" value="1"/>
</dbReference>
<dbReference type="Gene3D" id="3.40.50.300">
    <property type="entry name" value="P-loop containing nucleotide triphosphate hydrolases"/>
    <property type="match status" value="1"/>
</dbReference>
<dbReference type="InterPro" id="IPR003593">
    <property type="entry name" value="AAA+_ATPase"/>
</dbReference>
<dbReference type="InterPro" id="IPR050093">
    <property type="entry name" value="ABC_SmlMolc_Importer"/>
</dbReference>
<dbReference type="InterPro" id="IPR003439">
    <property type="entry name" value="ABC_transporter-like_ATP-bd"/>
</dbReference>
<dbReference type="InterPro" id="IPR017871">
    <property type="entry name" value="ABC_transporter-like_CS"/>
</dbReference>
<dbReference type="InterPro" id="IPR015853">
    <property type="entry name" value="ABC_transpr_FbpC"/>
</dbReference>
<dbReference type="InterPro" id="IPR041230">
    <property type="entry name" value="FbpC_C"/>
</dbReference>
<dbReference type="InterPro" id="IPR055223">
    <property type="entry name" value="FbpC_RD"/>
</dbReference>
<dbReference type="InterPro" id="IPR008995">
    <property type="entry name" value="Mo/tungstate-bd_C_term_dom"/>
</dbReference>
<dbReference type="InterPro" id="IPR027417">
    <property type="entry name" value="P-loop_NTPase"/>
</dbReference>
<dbReference type="PANTHER" id="PTHR42781:SF5">
    <property type="entry name" value="PUTRESCINE TRANSPORT ATP-BINDING PROTEIN POTG"/>
    <property type="match status" value="1"/>
</dbReference>
<dbReference type="PANTHER" id="PTHR42781">
    <property type="entry name" value="SPERMIDINE/PUTRESCINE IMPORT ATP-BINDING PROTEIN POTA"/>
    <property type="match status" value="1"/>
</dbReference>
<dbReference type="Pfam" id="PF00005">
    <property type="entry name" value="ABC_tran"/>
    <property type="match status" value="1"/>
</dbReference>
<dbReference type="Pfam" id="PF22443">
    <property type="entry name" value="FbpC-like_RD"/>
    <property type="match status" value="1"/>
</dbReference>
<dbReference type="Pfam" id="PF17845">
    <property type="entry name" value="FbpC_C_terminal"/>
    <property type="match status" value="1"/>
</dbReference>
<dbReference type="SMART" id="SM00382">
    <property type="entry name" value="AAA"/>
    <property type="match status" value="1"/>
</dbReference>
<dbReference type="SUPFAM" id="SSF50331">
    <property type="entry name" value="MOP-like"/>
    <property type="match status" value="1"/>
</dbReference>
<dbReference type="SUPFAM" id="SSF52540">
    <property type="entry name" value="P-loop containing nucleoside triphosphate hydrolases"/>
    <property type="match status" value="1"/>
</dbReference>
<dbReference type="PROSITE" id="PS00211">
    <property type="entry name" value="ABC_TRANSPORTER_1"/>
    <property type="match status" value="1"/>
</dbReference>
<dbReference type="PROSITE" id="PS50893">
    <property type="entry name" value="ABC_TRANSPORTER_2"/>
    <property type="match status" value="1"/>
</dbReference>
<dbReference type="PROSITE" id="PS51242">
    <property type="entry name" value="FBPC"/>
    <property type="match status" value="1"/>
</dbReference>
<sequence>MTAALHIGHLSKSFQNTPVLNDISLSLDPGEILFIVGASGCGKTTLLRCLAGFEQPDFGEISLSGRTIFSKNTNLPVRERRLGYVVQEGVLFPHLTVYRNTAYGLGNGKGKTAQERQRIEAMLELTGISELAGRYPHELSGGQQQRVALARALAPDPELILLDEPFSALDEQLRRQIREDMIAALRANGKSAVFVSHDREEALQYADRIAVMKQGRILQTASPHELYRQPADLDAALFIGEGIVFPAALNADGTADCGLGRLPVQSGAPAGTRGTLLIRPEQFSLHPHSAPTASIHAVVLKTTPKARHTEISLRVGQTVLTLNLPSAPTLSDGISAVLHLDGPALFFPGNTL</sequence>
<proteinExistence type="inferred from homology"/>
<reference key="1">
    <citation type="journal article" date="2000" name="Science">
        <title>Complete genome sequence of Neisseria meningitidis serogroup B strain MC58.</title>
        <authorList>
            <person name="Tettelin H."/>
            <person name="Saunders N.J."/>
            <person name="Heidelberg J.F."/>
            <person name="Jeffries A.C."/>
            <person name="Nelson K.E."/>
            <person name="Eisen J.A."/>
            <person name="Ketchum K.A."/>
            <person name="Hood D.W."/>
            <person name="Peden J.F."/>
            <person name="Dodson R.J."/>
            <person name="Nelson W.C."/>
            <person name="Gwinn M.L."/>
            <person name="DeBoy R.T."/>
            <person name="Peterson J.D."/>
            <person name="Hickey E.K."/>
            <person name="Haft D.H."/>
            <person name="Salzberg S.L."/>
            <person name="White O."/>
            <person name="Fleischmann R.D."/>
            <person name="Dougherty B.A."/>
            <person name="Mason T.M."/>
            <person name="Ciecko A."/>
            <person name="Parksey D.S."/>
            <person name="Blair E."/>
            <person name="Cittone H."/>
            <person name="Clark E.B."/>
            <person name="Cotton M.D."/>
            <person name="Utterback T.R."/>
            <person name="Khouri H.M."/>
            <person name="Qin H."/>
            <person name="Vamathevan J.J."/>
            <person name="Gill J."/>
            <person name="Scarlato V."/>
            <person name="Masignani V."/>
            <person name="Pizza M."/>
            <person name="Grandi G."/>
            <person name="Sun L."/>
            <person name="Smith H.O."/>
            <person name="Fraser C.M."/>
            <person name="Moxon E.R."/>
            <person name="Rappuoli R."/>
            <person name="Venter J.C."/>
        </authorList>
    </citation>
    <scope>NUCLEOTIDE SEQUENCE [LARGE SCALE GENOMIC DNA]</scope>
    <source>
        <strain>ATCC BAA-335 / MC58</strain>
    </source>
</reference>
<evidence type="ECO:0000255" key="1">
    <source>
        <dbReference type="HAMAP-Rule" id="MF_01706"/>
    </source>
</evidence>